<accession>F1NY98</accession>
<dbReference type="EMBL" id="AADN03000073">
    <property type="status" value="NOT_ANNOTATED_CDS"/>
    <property type="molecule type" value="Genomic_DNA"/>
</dbReference>
<dbReference type="EMBL" id="AADN03000437">
    <property type="status" value="NOT_ANNOTATED_CDS"/>
    <property type="molecule type" value="Genomic_DNA"/>
</dbReference>
<dbReference type="EMBL" id="AADN03000849">
    <property type="status" value="NOT_ANNOTATED_CDS"/>
    <property type="molecule type" value="Genomic_DNA"/>
</dbReference>
<dbReference type="RefSeq" id="XP_046796329.1">
    <property type="nucleotide sequence ID" value="XM_046940373.1"/>
</dbReference>
<dbReference type="SMR" id="F1NY98"/>
<dbReference type="FunCoup" id="F1NY98">
    <property type="interactions" value="83"/>
</dbReference>
<dbReference type="STRING" id="9031.ENSGALP00000025946"/>
<dbReference type="GlyCosmos" id="F1NY98">
    <property type="glycosylation" value="18 sites, No reported glycans"/>
</dbReference>
<dbReference type="GlyGen" id="F1NY98">
    <property type="glycosylation" value="19 sites"/>
</dbReference>
<dbReference type="PaxDb" id="9031-ENSGALP00000025946"/>
<dbReference type="Ensembl" id="ENSGALT00010032801.1">
    <property type="protein sequence ID" value="ENSGALP00010019428.1"/>
    <property type="gene ID" value="ENSGALG00010013589.1"/>
</dbReference>
<dbReference type="GeneID" id="418525"/>
<dbReference type="VEuPathDB" id="HostDB:geneid_418525"/>
<dbReference type="eggNOG" id="KOG3510">
    <property type="taxonomic scope" value="Eukaryota"/>
</dbReference>
<dbReference type="GeneTree" id="ENSGT00940000154678"/>
<dbReference type="HOGENOM" id="CLU_001038_0_1_1"/>
<dbReference type="InParanoid" id="F1NY98"/>
<dbReference type="OMA" id="DGFDHHK"/>
<dbReference type="OrthoDB" id="152385at2759"/>
<dbReference type="TreeFam" id="TF316846"/>
<dbReference type="PRO" id="PR:F1NY98"/>
<dbReference type="Proteomes" id="UP000000539">
    <property type="component" value="Chromosome 1"/>
</dbReference>
<dbReference type="Bgee" id="ENSGALG00000016138">
    <property type="expression patterns" value="Expressed in brain and 2 other cell types or tissues"/>
</dbReference>
<dbReference type="GO" id="GO:0030425">
    <property type="term" value="C:dendrite"/>
    <property type="evidence" value="ECO:0007669"/>
    <property type="project" value="Ensembl"/>
</dbReference>
<dbReference type="GO" id="GO:0030426">
    <property type="term" value="C:growth cone"/>
    <property type="evidence" value="ECO:0007669"/>
    <property type="project" value="Ensembl"/>
</dbReference>
<dbReference type="GO" id="GO:0043025">
    <property type="term" value="C:neuronal cell body"/>
    <property type="evidence" value="ECO:0007669"/>
    <property type="project" value="Ensembl"/>
</dbReference>
<dbReference type="GO" id="GO:0005886">
    <property type="term" value="C:plasma membrane"/>
    <property type="evidence" value="ECO:0007669"/>
    <property type="project" value="UniProtKB-SubCell"/>
</dbReference>
<dbReference type="GO" id="GO:0045202">
    <property type="term" value="C:synapse"/>
    <property type="evidence" value="ECO:0000314"/>
    <property type="project" value="UniProtKB"/>
</dbReference>
<dbReference type="GO" id="GO:1990890">
    <property type="term" value="F:netrin receptor binding"/>
    <property type="evidence" value="ECO:0007669"/>
    <property type="project" value="Ensembl"/>
</dbReference>
<dbReference type="GO" id="GO:1990782">
    <property type="term" value="F:protein tyrosine kinase binding"/>
    <property type="evidence" value="ECO:0007669"/>
    <property type="project" value="Ensembl"/>
</dbReference>
<dbReference type="GO" id="GO:0007411">
    <property type="term" value="P:axon guidance"/>
    <property type="evidence" value="ECO:0007669"/>
    <property type="project" value="Ensembl"/>
</dbReference>
<dbReference type="GO" id="GO:0060219">
    <property type="term" value="P:camera-type eye photoreceptor cell differentiation"/>
    <property type="evidence" value="ECO:0000314"/>
    <property type="project" value="UniProtKB"/>
</dbReference>
<dbReference type="GO" id="GO:0048813">
    <property type="term" value="P:dendrite morphogenesis"/>
    <property type="evidence" value="ECO:0007669"/>
    <property type="project" value="Ensembl"/>
</dbReference>
<dbReference type="GO" id="GO:0070593">
    <property type="term" value="P:dendrite self-avoidance"/>
    <property type="evidence" value="ECO:0007669"/>
    <property type="project" value="Ensembl"/>
</dbReference>
<dbReference type="GO" id="GO:0060996">
    <property type="term" value="P:dendritic spine development"/>
    <property type="evidence" value="ECO:0007669"/>
    <property type="project" value="Ensembl"/>
</dbReference>
<dbReference type="GO" id="GO:0007156">
    <property type="term" value="P:homophilic cell adhesion via plasma membrane adhesion molecules"/>
    <property type="evidence" value="ECO:0000314"/>
    <property type="project" value="UniProtKB"/>
</dbReference>
<dbReference type="GO" id="GO:0007626">
    <property type="term" value="P:locomotory behavior"/>
    <property type="evidence" value="ECO:0007669"/>
    <property type="project" value="Ensembl"/>
</dbReference>
<dbReference type="GO" id="GO:0007162">
    <property type="term" value="P:negative regulation of cell adhesion"/>
    <property type="evidence" value="ECO:0007669"/>
    <property type="project" value="Ensembl"/>
</dbReference>
<dbReference type="GO" id="GO:0048842">
    <property type="term" value="P:positive regulation of axon extension involved in axon guidance"/>
    <property type="evidence" value="ECO:0007669"/>
    <property type="project" value="Ensembl"/>
</dbReference>
<dbReference type="GO" id="GO:0042327">
    <property type="term" value="P:positive regulation of phosphorylation"/>
    <property type="evidence" value="ECO:0007669"/>
    <property type="project" value="Ensembl"/>
</dbReference>
<dbReference type="GO" id="GO:0060060">
    <property type="term" value="P:post-embryonic retina morphogenesis in camera-type eye"/>
    <property type="evidence" value="ECO:0007669"/>
    <property type="project" value="Ensembl"/>
</dbReference>
<dbReference type="GO" id="GO:0010842">
    <property type="term" value="P:retina layer formation"/>
    <property type="evidence" value="ECO:0000314"/>
    <property type="project" value="UniProtKB"/>
</dbReference>
<dbReference type="GO" id="GO:0035176">
    <property type="term" value="P:social behavior"/>
    <property type="evidence" value="ECO:0007669"/>
    <property type="project" value="Ensembl"/>
</dbReference>
<dbReference type="GO" id="GO:0007416">
    <property type="term" value="P:synapse assembly"/>
    <property type="evidence" value="ECO:0000314"/>
    <property type="project" value="UniProtKB"/>
</dbReference>
<dbReference type="GO" id="GO:0035249">
    <property type="term" value="P:synaptic transmission, glutamatergic"/>
    <property type="evidence" value="ECO:0007669"/>
    <property type="project" value="Ensembl"/>
</dbReference>
<dbReference type="CDD" id="cd00063">
    <property type="entry name" value="FN3"/>
    <property type="match status" value="6"/>
</dbReference>
<dbReference type="CDD" id="cd00096">
    <property type="entry name" value="Ig"/>
    <property type="match status" value="1"/>
</dbReference>
<dbReference type="CDD" id="cd05734">
    <property type="entry name" value="Ig_DSCAM"/>
    <property type="match status" value="1"/>
</dbReference>
<dbReference type="CDD" id="cd05735">
    <property type="entry name" value="Ig_DSCAM"/>
    <property type="match status" value="1"/>
</dbReference>
<dbReference type="CDD" id="cd20958">
    <property type="entry name" value="IgI_5_Dscam"/>
    <property type="match status" value="1"/>
</dbReference>
<dbReference type="FunFam" id="2.60.40.10:FF:000333">
    <property type="entry name" value="Down syndrome cell adhesion molecule"/>
    <property type="match status" value="1"/>
</dbReference>
<dbReference type="FunFam" id="2.60.40.10:FF:000401">
    <property type="entry name" value="Down syndrome cell adhesion molecule"/>
    <property type="match status" value="1"/>
</dbReference>
<dbReference type="FunFam" id="2.60.40.10:FF:000729">
    <property type="entry name" value="Down syndrome cell adhesion molecule"/>
    <property type="match status" value="1"/>
</dbReference>
<dbReference type="FunFam" id="2.60.40.10:FF:000141">
    <property type="entry name" value="Down syndrome cell adhesion molecule a"/>
    <property type="match status" value="1"/>
</dbReference>
<dbReference type="FunFam" id="2.60.40.10:FF:000176">
    <property type="entry name" value="Down syndrome cell adhesion molecule a"/>
    <property type="match status" value="1"/>
</dbReference>
<dbReference type="FunFam" id="2.60.40.10:FF:000215">
    <property type="entry name" value="Down syndrome cell adhesion molecule a"/>
    <property type="match status" value="1"/>
</dbReference>
<dbReference type="FunFam" id="2.60.40.10:FF:000017">
    <property type="entry name" value="Down syndrome cell adhesion molecule b"/>
    <property type="match status" value="1"/>
</dbReference>
<dbReference type="FunFam" id="2.60.40.10:FF:000104">
    <property type="entry name" value="Down syndrome cell adhesion molecule b"/>
    <property type="match status" value="1"/>
</dbReference>
<dbReference type="FunFam" id="2.60.40.10:FF:000167">
    <property type="entry name" value="Down syndrome cell adhesion molecule b"/>
    <property type="match status" value="1"/>
</dbReference>
<dbReference type="FunFam" id="2.60.40.10:FF:000172">
    <property type="entry name" value="Down syndrome cell adhesion molecule b"/>
    <property type="match status" value="1"/>
</dbReference>
<dbReference type="FunFam" id="2.60.40.10:FF:000219">
    <property type="entry name" value="Down syndrome cell adhesion molecule homolog"/>
    <property type="match status" value="1"/>
</dbReference>
<dbReference type="FunFam" id="2.60.40.10:FF:000229">
    <property type="entry name" value="Down syndrome cell adhesion molecule homolog"/>
    <property type="match status" value="1"/>
</dbReference>
<dbReference type="FunFam" id="2.60.40.10:FF:000120">
    <property type="entry name" value="Down syndrome cell adhesion molecule like 1"/>
    <property type="match status" value="1"/>
</dbReference>
<dbReference type="FunFam" id="2.60.40.10:FF:000264">
    <property type="entry name" value="Down syndrome cell adhesion molecule like 1"/>
    <property type="match status" value="1"/>
</dbReference>
<dbReference type="FunFam" id="2.60.40.10:FF:000315">
    <property type="entry name" value="Down syndrome cell adhesion molecule like 1"/>
    <property type="match status" value="1"/>
</dbReference>
<dbReference type="FunFam" id="2.60.40.10:FF:000477">
    <property type="entry name" value="DS cell adhesion molecule like 1"/>
    <property type="match status" value="1"/>
</dbReference>
<dbReference type="Gene3D" id="2.60.40.10">
    <property type="entry name" value="Immunoglobulins"/>
    <property type="match status" value="16"/>
</dbReference>
<dbReference type="InterPro" id="IPR056754">
    <property type="entry name" value="DSCAM/DSCAML_C"/>
</dbReference>
<dbReference type="InterPro" id="IPR003961">
    <property type="entry name" value="FN3_dom"/>
</dbReference>
<dbReference type="InterPro" id="IPR036116">
    <property type="entry name" value="FN3_sf"/>
</dbReference>
<dbReference type="InterPro" id="IPR007110">
    <property type="entry name" value="Ig-like_dom"/>
</dbReference>
<dbReference type="InterPro" id="IPR036179">
    <property type="entry name" value="Ig-like_dom_sf"/>
</dbReference>
<dbReference type="InterPro" id="IPR013783">
    <property type="entry name" value="Ig-like_fold"/>
</dbReference>
<dbReference type="InterPro" id="IPR013098">
    <property type="entry name" value="Ig_I-set"/>
</dbReference>
<dbReference type="InterPro" id="IPR003599">
    <property type="entry name" value="Ig_sub"/>
</dbReference>
<dbReference type="InterPro" id="IPR003598">
    <property type="entry name" value="Ig_sub2"/>
</dbReference>
<dbReference type="InterPro" id="IPR013106">
    <property type="entry name" value="Ig_V-set"/>
</dbReference>
<dbReference type="PANTHER" id="PTHR44170:SF6">
    <property type="entry name" value="CONTACTIN"/>
    <property type="match status" value="1"/>
</dbReference>
<dbReference type="PANTHER" id="PTHR44170">
    <property type="entry name" value="PROTEIN SIDEKICK"/>
    <property type="match status" value="1"/>
</dbReference>
<dbReference type="Pfam" id="PF00041">
    <property type="entry name" value="fn3"/>
    <property type="match status" value="5"/>
</dbReference>
<dbReference type="Pfam" id="PF25059">
    <property type="entry name" value="FN3_DSCAM-DSCAML_C"/>
    <property type="match status" value="1"/>
</dbReference>
<dbReference type="Pfam" id="PF07679">
    <property type="entry name" value="I-set"/>
    <property type="match status" value="5"/>
</dbReference>
<dbReference type="Pfam" id="PF13927">
    <property type="entry name" value="Ig_3"/>
    <property type="match status" value="3"/>
</dbReference>
<dbReference type="SMART" id="SM00060">
    <property type="entry name" value="FN3"/>
    <property type="match status" value="6"/>
</dbReference>
<dbReference type="SMART" id="SM00409">
    <property type="entry name" value="IG"/>
    <property type="match status" value="10"/>
</dbReference>
<dbReference type="SMART" id="SM00408">
    <property type="entry name" value="IGc2"/>
    <property type="match status" value="9"/>
</dbReference>
<dbReference type="SMART" id="SM00406">
    <property type="entry name" value="IGv"/>
    <property type="match status" value="4"/>
</dbReference>
<dbReference type="SUPFAM" id="SSF49265">
    <property type="entry name" value="Fibronectin type III"/>
    <property type="match status" value="3"/>
</dbReference>
<dbReference type="SUPFAM" id="SSF48726">
    <property type="entry name" value="Immunoglobulin"/>
    <property type="match status" value="10"/>
</dbReference>
<dbReference type="PROSITE" id="PS50853">
    <property type="entry name" value="FN3"/>
    <property type="match status" value="6"/>
</dbReference>
<dbReference type="PROSITE" id="PS50835">
    <property type="entry name" value="IG_LIKE"/>
    <property type="match status" value="10"/>
</dbReference>
<name>DSCAM_CHICK</name>
<protein>
    <recommendedName>
        <fullName evidence="10">Cell adhesion molecule DSCAM</fullName>
    </recommendedName>
    <alternativeName>
        <fullName>Down syndrome cell adhesion molecule homolog</fullName>
    </alternativeName>
</protein>
<sequence>MWMLAVALLHSISHGILTENFLSHHAFPSLLLSLHFSHPSVFSEDLHASLYFVNASLQEVVFASTTGTLVPCPAAGIPPVTLRWYLATGEEIYDVPGIRHVHPNGTLQIFPFPPSSFNNLIHDNTYYCTAENPSGKIRSQDVHIKAVLREPYTVRVEDQKAMRGNVAVFKCIIPSSVEAYITVVSWEKDTVSLVSGPRFLITSTGALYILDVQNEDGLYNYRCITRHRYTGETRQSNSARLFVSDPANSAPSILDGFDHRKAMAGQRVELPCKASGHPTPKYRWLKDNIPWEPDSRFRQTVTGLLIENTRPSDSGNYVCEVWNNYGTAEMIGRLYVKQPLKATISPRKVKSSVGSQVSLSCSVTGTEDQELSWYRNGEIINPGNNVRITGINRENLIMDGMAKSDGGAYQCFVRKDKMSAQDYVQVILEDGTPKIISAFSEKVVSPGEPVSLMCNVKGTPLPTITWTLDEDPIVKDGSHRISQIITSEGNVVSYLNISNTQVRDGGVYRCTANNSAGVVLYQARINVRGPASIRPMKNITAIAGRDTYIHCRVIGYPYYSIKWYKNSNLLPFNHRQVAFENNGTLKLSDVQKEVDEGEYTCNVLVQPQLSTSQSVHVTVKVPPFIQPFEFPRFSIGQRVFIPCVVVSGDLPITITWQKDGRPIPASLGVTIDNIDFTSSLRISNLSLMHNGNYTCIARNDAAAVEHQSQLIVRVPPRFVVQPSDQDGIYGKAVILNCSAEGYPVPTIVWKYSKGAGVPQFQPIALNGRIQLLTNGSLLIKHVLEEDSGYYLCKVSNDVGADVSKSMYLTVKIPAMITSYPNTTLATQGQKKEMSCTAHGEKPIIVRWEKEDRIINPEMSRYLVSTKEVGDEVISTLQILPTVREDSGFFSCHAINSYGEDRGIIQLTVQEPPDPPEIEIREVRARSIALRWTMGFDGNSPITGYDIECKNKSDSWDSVQRTKDVSPQLNQATIIDLHPSSTYNIRMYAKNRIGKSEASNELTITTDEAAPDGPPQDVQLEPISSQSIRVTWKAPKKHLQNGIIRGYQIGYREYSAGGNFQFNIISIDTTGDSEVYTLNNLKKFTQYGMVVQACNRAGIGPSSQEIITTTLEDVPSCPPGNVQATATSPETISISWSTLAKETLNGILQGFRVIYWANLLDGELGEIRNVTTTQPSLELDGLEKYTNYSIQVLAFTRAGDGVRSEQIFTRTKEDVPGPPAGVKAAASSASTVFVSWLPPLKLNGIIRKYTVFCSHPYPTVISEFEASPDSFSYRIPNLSRNRQYSVWVVAVTAAGRGNSSEIITVEPLAKAPARILTFSGTVTTPWMKDIVLPCKAVGDPAPTVKWMKDSNGTPSLVMIDGRRSIFSNGSFVIRTVKAEDSGYYSCVASNNWGSDEIILNLQVQVPPDQPRLTVSKTTSSSITLSWIPGDNGGSSIRGYILQYSEDNSEQWGSFPISPSERSYRLETLKCGTWYKFTLTAQNGVGPGRISEIIEAKTLGKEPQFSKEQELFASINTTRVRLNLIGWNDGGCPITSFTLEYRPFGTTVWTTAQRTSLSKSYILYDLQEATWYELQMRVCNSAGCAEKQAKFATLNYDGSTIPPLIKSVVQSEEGLATNEGLKMLVTISCILVGVLLLFVMLLIVRRRRREQRLKRLRDAKSLAEMLMSKNTRTSDTLNKQQQTLRMHIDIPRAQLLIEERDTMETIDDRSTVLLTDADFGETSKQKSLTVTHTVHYQSVSQATGPLVDVSDARPGTNPTTRRSAKTGPTARNRYASQWTLNRPHPTISAHTLTTDWRLPTPRPAGSVDKESDSYSVSPSQDTDRARSSMVSTESASSTYEELARAYEHAKMEEQLRHAKFTITECFISDTSSEQLTAGTNDYTDSLTSSTPSESGICRFTASPPKPQDGGRVMNMAVPKAHRPGDLVHLPPYLRMDFLLNRGAQGASRDLGLGQACLEPQKSRTLKRPTVLEPIPMEASSTREAQSWQPGAVATLPQREGAELGQAAKMSSSQESLLDSRGHLKGNNPYAKSYTLV</sequence>
<reference key="1">
    <citation type="journal article" date="2004" name="Nature">
        <title>Sequence and comparative analysis of the chicken genome provide unique perspectives on vertebrate evolution.</title>
        <authorList>
            <person name="Hillier L.W."/>
            <person name="Miller W."/>
            <person name="Birney E."/>
            <person name="Warren W."/>
            <person name="Hardison R.C."/>
            <person name="Ponting C.P."/>
            <person name="Bork P."/>
            <person name="Burt D.W."/>
            <person name="Groenen M.A.M."/>
            <person name="Delany M.E."/>
            <person name="Dodgson J.B."/>
            <person name="Chinwalla A.T."/>
            <person name="Cliften P.F."/>
            <person name="Clifton S.W."/>
            <person name="Delehaunty K.D."/>
            <person name="Fronick C."/>
            <person name="Fulton R.S."/>
            <person name="Graves T.A."/>
            <person name="Kremitzki C."/>
            <person name="Layman D."/>
            <person name="Magrini V."/>
            <person name="McPherson J.D."/>
            <person name="Miner T.L."/>
            <person name="Minx P."/>
            <person name="Nash W.E."/>
            <person name="Nhan M.N."/>
            <person name="Nelson J.O."/>
            <person name="Oddy L.G."/>
            <person name="Pohl C.S."/>
            <person name="Randall-Maher J."/>
            <person name="Smith S.M."/>
            <person name="Wallis J.W."/>
            <person name="Yang S.-P."/>
            <person name="Romanov M.N."/>
            <person name="Rondelli C.M."/>
            <person name="Paton B."/>
            <person name="Smith J."/>
            <person name="Morrice D."/>
            <person name="Daniels L."/>
            <person name="Tempest H.G."/>
            <person name="Robertson L."/>
            <person name="Masabanda J.S."/>
            <person name="Griffin D.K."/>
            <person name="Vignal A."/>
            <person name="Fillon V."/>
            <person name="Jacobbson L."/>
            <person name="Kerje S."/>
            <person name="Andersson L."/>
            <person name="Crooijmans R.P."/>
            <person name="Aerts J."/>
            <person name="van der Poel J.J."/>
            <person name="Ellegren H."/>
            <person name="Caldwell R.B."/>
            <person name="Hubbard S.J."/>
            <person name="Grafham D.V."/>
            <person name="Kierzek A.M."/>
            <person name="McLaren S.R."/>
            <person name="Overton I.M."/>
            <person name="Arakawa H."/>
            <person name="Beattie K.J."/>
            <person name="Bezzubov Y."/>
            <person name="Boardman P.E."/>
            <person name="Bonfield J.K."/>
            <person name="Croning M.D.R."/>
            <person name="Davies R.M."/>
            <person name="Francis M.D."/>
            <person name="Humphray S.J."/>
            <person name="Scott C.E."/>
            <person name="Taylor R.G."/>
            <person name="Tickle C."/>
            <person name="Brown W.R.A."/>
            <person name="Rogers J."/>
            <person name="Buerstedde J.-M."/>
            <person name="Wilson S.A."/>
            <person name="Stubbs L."/>
            <person name="Ovcharenko I."/>
            <person name="Gordon L."/>
            <person name="Lucas S."/>
            <person name="Miller M.M."/>
            <person name="Inoko H."/>
            <person name="Shiina T."/>
            <person name="Kaufman J."/>
            <person name="Salomonsen J."/>
            <person name="Skjoedt K."/>
            <person name="Wong G.K.-S."/>
            <person name="Wang J."/>
            <person name="Liu B."/>
            <person name="Wang J."/>
            <person name="Yu J."/>
            <person name="Yang H."/>
            <person name="Nefedov M."/>
            <person name="Koriabine M."/>
            <person name="Dejong P.J."/>
            <person name="Goodstadt L."/>
            <person name="Webber C."/>
            <person name="Dickens N.J."/>
            <person name="Letunic I."/>
            <person name="Suyama M."/>
            <person name="Torrents D."/>
            <person name="von Mering C."/>
            <person name="Zdobnov E.M."/>
            <person name="Makova K."/>
            <person name="Nekrutenko A."/>
            <person name="Elnitski L."/>
            <person name="Eswara P."/>
            <person name="King D.C."/>
            <person name="Yang S.-P."/>
            <person name="Tyekucheva S."/>
            <person name="Radakrishnan A."/>
            <person name="Harris R.S."/>
            <person name="Chiaromonte F."/>
            <person name="Taylor J."/>
            <person name="He J."/>
            <person name="Rijnkels M."/>
            <person name="Griffiths-Jones S."/>
            <person name="Ureta-Vidal A."/>
            <person name="Hoffman M.M."/>
            <person name="Severin J."/>
            <person name="Searle S.M.J."/>
            <person name="Law A.S."/>
            <person name="Speed D."/>
            <person name="Waddington D."/>
            <person name="Cheng Z."/>
            <person name="Tuzun E."/>
            <person name="Eichler E."/>
            <person name="Bao Z."/>
            <person name="Flicek P."/>
            <person name="Shteynberg D.D."/>
            <person name="Brent M.R."/>
            <person name="Bye J.M."/>
            <person name="Huckle E.J."/>
            <person name="Chatterji S."/>
            <person name="Dewey C."/>
            <person name="Pachter L."/>
            <person name="Kouranov A."/>
            <person name="Mourelatos Z."/>
            <person name="Hatzigeorgiou A.G."/>
            <person name="Paterson A.H."/>
            <person name="Ivarie R."/>
            <person name="Brandstrom M."/>
            <person name="Axelsson E."/>
            <person name="Backstrom N."/>
            <person name="Berlin S."/>
            <person name="Webster M.T."/>
            <person name="Pourquie O."/>
            <person name="Reymond A."/>
            <person name="Ucla C."/>
            <person name="Antonarakis S.E."/>
            <person name="Long M."/>
            <person name="Emerson J.J."/>
            <person name="Betran E."/>
            <person name="Dupanloup I."/>
            <person name="Kaessmann H."/>
            <person name="Hinrichs A.S."/>
            <person name="Bejerano G."/>
            <person name="Furey T.S."/>
            <person name="Harte R.A."/>
            <person name="Raney B."/>
            <person name="Siepel A."/>
            <person name="Kent W.J."/>
            <person name="Haussler D."/>
            <person name="Eyras E."/>
            <person name="Castelo R."/>
            <person name="Abril J.F."/>
            <person name="Castellano S."/>
            <person name="Camara F."/>
            <person name="Parra G."/>
            <person name="Guigo R."/>
            <person name="Bourque G."/>
            <person name="Tesler G."/>
            <person name="Pevzner P.A."/>
            <person name="Smit A."/>
            <person name="Fulton L.A."/>
            <person name="Mardis E.R."/>
            <person name="Wilson R.K."/>
        </authorList>
    </citation>
    <scope>NUCLEOTIDE SEQUENCE [LARGE SCALE GENOMIC DNA]</scope>
    <source>
        <strain>Red jungle fowl</strain>
    </source>
</reference>
<reference key="2">
    <citation type="journal article" date="2008" name="Nature">
        <title>Dscam and Sidekick proteins direct lamina-specific synaptic connections in vertebrate retina.</title>
        <authorList>
            <person name="Yamagata M."/>
            <person name="Sanes J.R."/>
        </authorList>
    </citation>
    <scope>FUNCTION</scope>
    <scope>SUBCELLULAR LOCATION</scope>
    <scope>SUBUNIT</scope>
    <scope>TISSUE SPECIFICITY</scope>
</reference>
<gene>
    <name type="primary">DSCAM</name>
</gene>
<evidence type="ECO:0000250" key="1">
    <source>
        <dbReference type="UniProtKB" id="O60469"/>
    </source>
</evidence>
<evidence type="ECO:0000250" key="2">
    <source>
        <dbReference type="UniProtKB" id="Q8VHZ8"/>
    </source>
</evidence>
<evidence type="ECO:0000250" key="3">
    <source>
        <dbReference type="UniProtKB" id="Q9ERC8"/>
    </source>
</evidence>
<evidence type="ECO:0000255" key="4"/>
<evidence type="ECO:0000255" key="5">
    <source>
        <dbReference type="PROSITE-ProRule" id="PRU00114"/>
    </source>
</evidence>
<evidence type="ECO:0000255" key="6">
    <source>
        <dbReference type="PROSITE-ProRule" id="PRU00316"/>
    </source>
</evidence>
<evidence type="ECO:0000255" key="7">
    <source>
        <dbReference type="PROSITE-ProRule" id="PRU00498"/>
    </source>
</evidence>
<evidence type="ECO:0000256" key="8">
    <source>
        <dbReference type="SAM" id="MobiDB-lite"/>
    </source>
</evidence>
<evidence type="ECO:0000269" key="9">
    <source>
    </source>
</evidence>
<evidence type="ECO:0000305" key="10"/>
<comment type="function">
    <text evidence="1 2 9">Cell adhesion molecule that plays a role in neuronal self-avoidance. Promotes repulsion between specific neuronal processes of either the same cell or the same subtype of cells. Mediates within retinal amacrine and ganglion cell subtypes both isoneuronal self-avoidance for creating an orderly dendritic arborization and heteroneuronal self-avoidance to maintain the mosaic spacing between amacrine and ganglion cell bodies (By similarity). Receptor for netrin required for axon guidance independently of and in collaboration with the receptor DCC (By similarity). Adhesion molecule that promotes lamina-specific synaptic connections in the retina: expressed in specific subsets of interneurons and retinal ganglion cells (RGCs) and promotes synaptic connectivity via homophilic interactions (PubMed:18216854).</text>
</comment>
<comment type="subunit">
    <text evidence="9">Homodimer; mediates homophilic interactions to promote cell adhesion.</text>
</comment>
<comment type="subcellular location">
    <subcellularLocation>
        <location evidence="3">Cell membrane</location>
        <topology evidence="3">Single-pass type I membrane protein</topology>
    </subcellularLocation>
    <subcellularLocation>
        <location evidence="3">Cell projection</location>
        <location evidence="3">Axon</location>
    </subcellularLocation>
    <subcellularLocation>
        <location evidence="9">Synapse</location>
    </subcellularLocation>
    <text evidence="3">Localized in the soma, cell membrane, axon and growth cone of dissociated commissural axons.</text>
</comment>
<comment type="tissue specificity">
    <text evidence="9">SDK1, SDK2, DSCAM and DSCAML1 are expressed in non-overlapping subsets of interneurons and retinal ganglion cells (RGCs) that form synapses in distinct inner plexiform layer (IPL) sublaminae (PubMed:18216854).</text>
</comment>
<keyword id="KW-0130">Cell adhesion</keyword>
<keyword id="KW-1003">Cell membrane</keyword>
<keyword id="KW-0966">Cell projection</keyword>
<keyword id="KW-1015">Disulfide bond</keyword>
<keyword id="KW-0325">Glycoprotein</keyword>
<keyword id="KW-0393">Immunoglobulin domain</keyword>
<keyword id="KW-0472">Membrane</keyword>
<keyword id="KW-0524">Neurogenesis</keyword>
<keyword id="KW-0597">Phosphoprotein</keyword>
<keyword id="KW-1185">Reference proteome</keyword>
<keyword id="KW-0677">Repeat</keyword>
<keyword id="KW-0732">Signal</keyword>
<keyword id="KW-0770">Synapse</keyword>
<keyword id="KW-0812">Transmembrane</keyword>
<keyword id="KW-1133">Transmembrane helix</keyword>
<feature type="signal peptide" evidence="4">
    <location>
        <begin position="1"/>
        <end position="18"/>
    </location>
</feature>
<feature type="chain" id="PRO_0000434543" description="Cell adhesion molecule DSCAM" evidence="4">
    <location>
        <begin position="19"/>
        <end position="2034"/>
    </location>
</feature>
<feature type="topological domain" description="Extracellular" evidence="10">
    <location>
        <begin position="19"/>
        <end position="1621"/>
    </location>
</feature>
<feature type="transmembrane region" description="Helical" evidence="4">
    <location>
        <begin position="1622"/>
        <end position="1642"/>
    </location>
</feature>
<feature type="topological domain" description="Cytoplasmic" evidence="10">
    <location>
        <begin position="1643"/>
        <end position="2034"/>
    </location>
</feature>
<feature type="domain" description="Ig-like C2-type 1" evidence="5">
    <location>
        <begin position="39"/>
        <end position="145"/>
    </location>
</feature>
<feature type="domain" description="Ig-like C2-type 2" evidence="5">
    <location>
        <begin position="151"/>
        <end position="242"/>
    </location>
</feature>
<feature type="domain" description="Ig-like C2-type 3" evidence="5">
    <location>
        <begin position="251"/>
        <end position="321"/>
    </location>
</feature>
<feature type="domain" description="Ig-like C2-type 4" evidence="5">
    <location>
        <begin position="339"/>
        <end position="427"/>
    </location>
</feature>
<feature type="domain" description="Ig-like C2-type 5" evidence="5">
    <location>
        <begin position="433"/>
        <end position="526"/>
    </location>
</feature>
<feature type="domain" description="Ig-like C2-type 6" evidence="5">
    <location>
        <begin position="530"/>
        <end position="618"/>
    </location>
</feature>
<feature type="domain" description="Ig-like C2-type 7" evidence="5">
    <location>
        <begin position="622"/>
        <end position="711"/>
    </location>
</feature>
<feature type="domain" description="Ig-like C2-type 8" evidence="5">
    <location>
        <begin position="716"/>
        <end position="809"/>
    </location>
</feature>
<feature type="domain" description="Ig-like C2-type 9" evidence="5">
    <location>
        <begin position="813"/>
        <end position="909"/>
    </location>
</feature>
<feature type="domain" description="Fibronectin type-III 1" evidence="6">
    <location>
        <begin position="911"/>
        <end position="1008"/>
    </location>
</feature>
<feature type="domain" description="Fibronectin type-III 2" evidence="6">
    <location>
        <begin position="1013"/>
        <end position="1112"/>
    </location>
</feature>
<feature type="domain" description="Fibronectin type-III 3" evidence="6">
    <location>
        <begin position="1117"/>
        <end position="1213"/>
    </location>
</feature>
<feature type="domain" description="Fibronectin type-III 4" evidence="6">
    <location>
        <begin position="1217"/>
        <end position="1311"/>
    </location>
</feature>
<feature type="domain" description="Ig-like C2-type 10" evidence="5">
    <location>
        <begin position="1311"/>
        <end position="1403"/>
    </location>
</feature>
<feature type="domain" description="Fibronectin type-III 5" evidence="6">
    <location>
        <begin position="1405"/>
        <end position="1499"/>
    </location>
</feature>
<feature type="domain" description="Fibronectin type-III 6" evidence="6">
    <location>
        <begin position="1500"/>
        <end position="1601"/>
    </location>
</feature>
<feature type="region of interest" description="Disordered" evidence="8">
    <location>
        <begin position="1744"/>
        <end position="1833"/>
    </location>
</feature>
<feature type="region of interest" description="Disordered" evidence="8">
    <location>
        <begin position="1882"/>
        <end position="1908"/>
    </location>
</feature>
<feature type="region of interest" description="Disordered" evidence="8">
    <location>
        <begin position="2001"/>
        <end position="2034"/>
    </location>
</feature>
<feature type="compositionally biased region" description="Polar residues" evidence="8">
    <location>
        <begin position="1882"/>
        <end position="1891"/>
    </location>
</feature>
<feature type="glycosylation site" description="N-linked (GlcNAc...) asparagine" evidence="7">
    <location>
        <position position="54"/>
    </location>
</feature>
<feature type="glycosylation site" description="N-linked (GlcNAc...) asparagine" evidence="7">
    <location>
        <position position="104"/>
    </location>
</feature>
<feature type="glycosylation site" description="N-linked (GlcNAc...) asparagine" evidence="7">
    <location>
        <position position="496"/>
    </location>
</feature>
<feature type="glycosylation site" description="N-linked (GlcNAc...) asparagine" evidence="7">
    <location>
        <position position="513"/>
    </location>
</feature>
<feature type="glycosylation site" description="N-linked (GlcNAc...) asparagine" evidence="7">
    <location>
        <position position="538"/>
    </location>
</feature>
<feature type="glycosylation site" description="N-linked (GlcNAc...) asparagine" evidence="7">
    <location>
        <position position="582"/>
    </location>
</feature>
<feature type="glycosylation site" description="N-linked (GlcNAc...) asparagine" evidence="7">
    <location>
        <position position="684"/>
    </location>
</feature>
<feature type="glycosylation site" description="N-linked (GlcNAc...) asparagine" evidence="7">
    <location>
        <position position="692"/>
    </location>
</feature>
<feature type="glycosylation site" description="N-linked (GlcNAc...) asparagine" evidence="7">
    <location>
        <position position="736"/>
    </location>
</feature>
<feature type="glycosylation site" description="N-linked (GlcNAc...) asparagine" evidence="7">
    <location>
        <position position="774"/>
    </location>
</feature>
<feature type="glycosylation site" description="N-linked (GlcNAc...) asparagine" evidence="7">
    <location>
        <position position="821"/>
    </location>
</feature>
<feature type="glycosylation site" description="N-linked (GlcNAc...) asparagine" evidence="7">
    <location>
        <position position="950"/>
    </location>
</feature>
<feature type="glycosylation site" description="N-linked (GlcNAc...) asparagine" evidence="7">
    <location>
        <position position="1168"/>
    </location>
</feature>
<feature type="glycosylation site" description="N-linked (GlcNAc...) asparagine" evidence="7">
    <location>
        <position position="1186"/>
    </location>
</feature>
<feature type="glycosylation site" description="N-linked (GlcNAc...) asparagine" evidence="7">
    <location>
        <position position="1276"/>
    </location>
</feature>
<feature type="glycosylation site" description="N-linked (GlcNAc...) asparagine" evidence="7">
    <location>
        <position position="1297"/>
    </location>
</feature>
<feature type="glycosylation site" description="N-linked (GlcNAc...) asparagine" evidence="7">
    <location>
        <position position="1367"/>
    </location>
</feature>
<feature type="glycosylation site" description="N-linked (GlcNAc...) asparagine" evidence="7">
    <location>
        <position position="1514"/>
    </location>
</feature>
<feature type="disulfide bond" evidence="5">
    <location>
        <begin position="72"/>
        <end position="128"/>
    </location>
</feature>
<feature type="disulfide bond" evidence="5">
    <location>
        <begin position="171"/>
        <end position="223"/>
    </location>
</feature>
<feature type="disulfide bond" evidence="5">
    <location>
        <begin position="272"/>
        <end position="319"/>
    </location>
</feature>
<feature type="disulfide bond" evidence="5">
    <location>
        <begin position="361"/>
        <end position="411"/>
    </location>
</feature>
<feature type="disulfide bond" evidence="5">
    <location>
        <begin position="454"/>
        <end position="510"/>
    </location>
</feature>
<feature type="disulfide bond" evidence="5">
    <location>
        <begin position="551"/>
        <end position="601"/>
    </location>
</feature>
<feature type="disulfide bond" evidence="5">
    <location>
        <begin position="643"/>
        <end position="695"/>
    </location>
</feature>
<feature type="disulfide bond" evidence="5">
    <location>
        <begin position="737"/>
        <end position="792"/>
    </location>
</feature>
<feature type="disulfide bond" evidence="5">
    <location>
        <begin position="835"/>
        <end position="891"/>
    </location>
</feature>
<feature type="disulfide bond" evidence="5">
    <location>
        <begin position="1333"/>
        <end position="1385"/>
    </location>
</feature>
<proteinExistence type="evidence at protein level"/>
<organism>
    <name type="scientific">Gallus gallus</name>
    <name type="common">Chicken</name>
    <dbReference type="NCBI Taxonomy" id="9031"/>
    <lineage>
        <taxon>Eukaryota</taxon>
        <taxon>Metazoa</taxon>
        <taxon>Chordata</taxon>
        <taxon>Craniata</taxon>
        <taxon>Vertebrata</taxon>
        <taxon>Euteleostomi</taxon>
        <taxon>Archelosauria</taxon>
        <taxon>Archosauria</taxon>
        <taxon>Dinosauria</taxon>
        <taxon>Saurischia</taxon>
        <taxon>Theropoda</taxon>
        <taxon>Coelurosauria</taxon>
        <taxon>Aves</taxon>
        <taxon>Neognathae</taxon>
        <taxon>Galloanserae</taxon>
        <taxon>Galliformes</taxon>
        <taxon>Phasianidae</taxon>
        <taxon>Phasianinae</taxon>
        <taxon>Gallus</taxon>
    </lineage>
</organism>